<reference key="1">
    <citation type="journal article" date="2002" name="Proc. Natl. Acad. Sci. U.S.A.">
        <title>Extensive mosaic structure revealed by the complete genome sequence of uropathogenic Escherichia coli.</title>
        <authorList>
            <person name="Welch R.A."/>
            <person name="Burland V."/>
            <person name="Plunkett G. III"/>
            <person name="Redford P."/>
            <person name="Roesch P."/>
            <person name="Rasko D."/>
            <person name="Buckles E.L."/>
            <person name="Liou S.-R."/>
            <person name="Boutin A."/>
            <person name="Hackett J."/>
            <person name="Stroud D."/>
            <person name="Mayhew G.F."/>
            <person name="Rose D.J."/>
            <person name="Zhou S."/>
            <person name="Schwartz D.C."/>
            <person name="Perna N.T."/>
            <person name="Mobley H.L.T."/>
            <person name="Donnenberg M.S."/>
            <person name="Blattner F.R."/>
        </authorList>
    </citation>
    <scope>NUCLEOTIDE SEQUENCE [LARGE SCALE GENOMIC DNA]</scope>
    <source>
        <strain>CFT073 / ATCC 700928 / UPEC</strain>
    </source>
</reference>
<dbReference type="EC" id="7.1.1.-"/>
<dbReference type="EMBL" id="AE014075">
    <property type="protein sequence ID" value="AAN81275.1"/>
    <property type="molecule type" value="Genomic_DNA"/>
</dbReference>
<dbReference type="RefSeq" id="WP_000393511.1">
    <property type="nucleotide sequence ID" value="NZ_CP051263.1"/>
</dbReference>
<dbReference type="SMR" id="P0AFE1"/>
<dbReference type="STRING" id="199310.c2821"/>
<dbReference type="GeneID" id="93774894"/>
<dbReference type="KEGG" id="ecc:c2821"/>
<dbReference type="eggNOG" id="COG0839">
    <property type="taxonomic scope" value="Bacteria"/>
</dbReference>
<dbReference type="HOGENOM" id="CLU_085957_0_1_6"/>
<dbReference type="BioCyc" id="ECOL199310:C2821-MONOMER"/>
<dbReference type="Proteomes" id="UP000001410">
    <property type="component" value="Chromosome"/>
</dbReference>
<dbReference type="GO" id="GO:0005886">
    <property type="term" value="C:plasma membrane"/>
    <property type="evidence" value="ECO:0007669"/>
    <property type="project" value="UniProtKB-SubCell"/>
</dbReference>
<dbReference type="GO" id="GO:0008137">
    <property type="term" value="F:NADH dehydrogenase (ubiquinone) activity"/>
    <property type="evidence" value="ECO:0007669"/>
    <property type="project" value="InterPro"/>
</dbReference>
<dbReference type="GO" id="GO:0048038">
    <property type="term" value="F:quinone binding"/>
    <property type="evidence" value="ECO:0007669"/>
    <property type="project" value="UniProtKB-KW"/>
</dbReference>
<dbReference type="FunFam" id="1.20.120.1200:FF:000001">
    <property type="entry name" value="NADH-quinone oxidoreductase subunit J"/>
    <property type="match status" value="1"/>
</dbReference>
<dbReference type="Gene3D" id="1.20.120.1200">
    <property type="entry name" value="NADH-ubiquinone/plastoquinone oxidoreductase chain 6, subunit NuoJ"/>
    <property type="match status" value="1"/>
</dbReference>
<dbReference type="InterPro" id="IPR001457">
    <property type="entry name" value="NADH_UbQ/plastoQ_OxRdtase_su6"/>
</dbReference>
<dbReference type="InterPro" id="IPR042106">
    <property type="entry name" value="Nuo/plastoQ_OxRdtase_6_NuoJ"/>
</dbReference>
<dbReference type="NCBIfam" id="NF005162">
    <property type="entry name" value="PRK06638.1-1"/>
    <property type="match status" value="1"/>
</dbReference>
<dbReference type="PANTHER" id="PTHR33269">
    <property type="entry name" value="NADH-UBIQUINONE OXIDOREDUCTASE CHAIN 6"/>
    <property type="match status" value="1"/>
</dbReference>
<dbReference type="PANTHER" id="PTHR33269:SF17">
    <property type="entry name" value="NADH-UBIQUINONE OXIDOREDUCTASE CHAIN 6"/>
    <property type="match status" value="1"/>
</dbReference>
<dbReference type="Pfam" id="PF00499">
    <property type="entry name" value="Oxidored_q3"/>
    <property type="match status" value="1"/>
</dbReference>
<proteinExistence type="inferred from homology"/>
<comment type="function">
    <text evidence="1">NDH-1 shuttles electrons from NADH, via FMN and iron-sulfur (Fe-S) centers, to quinones in the respiratory chain. The immediate electron acceptor for the enzyme in this species is believed to be ubiquinone. Couples the redox reaction to proton translocation (for every two electrons transferred, four hydrogen ions are translocated across the cytoplasmic membrane), and thus conserves the redox energy in a proton gradient (By similarity).</text>
</comment>
<comment type="catalytic activity">
    <reaction>
        <text>a quinone + NADH + 5 H(+)(in) = a quinol + NAD(+) + 4 H(+)(out)</text>
        <dbReference type="Rhea" id="RHEA:57888"/>
        <dbReference type="ChEBI" id="CHEBI:15378"/>
        <dbReference type="ChEBI" id="CHEBI:24646"/>
        <dbReference type="ChEBI" id="CHEBI:57540"/>
        <dbReference type="ChEBI" id="CHEBI:57945"/>
        <dbReference type="ChEBI" id="CHEBI:132124"/>
    </reaction>
</comment>
<comment type="subunit">
    <text evidence="1">Composed of 13 different subunits. Subunits NuoA, H, J, K, L, M, N constitute the membrane sector of the complex (By similarity).</text>
</comment>
<comment type="subcellular location">
    <subcellularLocation>
        <location evidence="1">Cell inner membrane</location>
        <topology evidence="1">Multi-pass membrane protein</topology>
    </subcellularLocation>
</comment>
<comment type="similarity">
    <text evidence="3">Belongs to the complex I subunit 6 family.</text>
</comment>
<sequence length="184" mass="19875">MEFAFYICGLIAILATLRVITHTNPVHALLYLIISLLAISGVFFSLGAYFAGALEIIVYAGAIMVLFVFVVMMLNLGGSEIEQERQWLKPQVWIGPAILSAIMLVVIVYAILGVNDQGIDGTPISAKAVGITLFGPYVLAVELASMLLLAGLVVAFHVGREERAGEVLSNRKDDSAKRKTEEHA</sequence>
<gene>
    <name type="primary">nuoJ</name>
    <name type="ordered locus">c2821</name>
</gene>
<name>NUOJ_ECOL6</name>
<protein>
    <recommendedName>
        <fullName>NADH-quinone oxidoreductase subunit J</fullName>
        <ecNumber>7.1.1.-</ecNumber>
    </recommendedName>
    <alternativeName>
        <fullName>NADH dehydrogenase I subunit J</fullName>
    </alternativeName>
    <alternativeName>
        <fullName>NDH-1 subunit J</fullName>
    </alternativeName>
    <alternativeName>
        <fullName>NUO10</fullName>
    </alternativeName>
</protein>
<keyword id="KW-0997">Cell inner membrane</keyword>
<keyword id="KW-1003">Cell membrane</keyword>
<keyword id="KW-0472">Membrane</keyword>
<keyword id="KW-0520">NAD</keyword>
<keyword id="KW-0874">Quinone</keyword>
<keyword id="KW-1185">Reference proteome</keyword>
<keyword id="KW-1278">Translocase</keyword>
<keyword id="KW-0812">Transmembrane</keyword>
<keyword id="KW-1133">Transmembrane helix</keyword>
<keyword id="KW-0830">Ubiquinone</keyword>
<feature type="chain" id="PRO_0000118372" description="NADH-quinone oxidoreductase subunit J">
    <location>
        <begin position="1"/>
        <end position="184"/>
    </location>
</feature>
<feature type="transmembrane region" description="Helical" evidence="2">
    <location>
        <begin position="1"/>
        <end position="21"/>
    </location>
</feature>
<feature type="topological domain" description="Cytoplasmic" evidence="2">
    <location>
        <begin position="22"/>
        <end position="27"/>
    </location>
</feature>
<feature type="transmembrane region" description="Helical" evidence="2">
    <location>
        <begin position="28"/>
        <end position="48"/>
    </location>
</feature>
<feature type="topological domain" description="Periplasmic" evidence="2">
    <location>
        <begin position="49"/>
        <end position="53"/>
    </location>
</feature>
<feature type="transmembrane region" description="Helical" evidence="2">
    <location>
        <begin position="54"/>
        <end position="74"/>
    </location>
</feature>
<feature type="topological domain" description="Cytoplasmic" evidence="2">
    <location>
        <begin position="75"/>
        <end position="91"/>
    </location>
</feature>
<feature type="transmembrane region" description="Helical" evidence="2">
    <location>
        <begin position="92"/>
        <end position="112"/>
    </location>
</feature>
<feature type="topological domain" description="Periplasmic" evidence="2">
    <location>
        <begin position="113"/>
        <end position="137"/>
    </location>
</feature>
<feature type="transmembrane region" description="Helical" evidence="2">
    <location>
        <begin position="138"/>
        <end position="158"/>
    </location>
</feature>
<feature type="topological domain" description="Cytoplasmic" evidence="2">
    <location>
        <begin position="159"/>
        <end position="184"/>
    </location>
</feature>
<organism>
    <name type="scientific">Escherichia coli O6:H1 (strain CFT073 / ATCC 700928 / UPEC)</name>
    <dbReference type="NCBI Taxonomy" id="199310"/>
    <lineage>
        <taxon>Bacteria</taxon>
        <taxon>Pseudomonadati</taxon>
        <taxon>Pseudomonadota</taxon>
        <taxon>Gammaproteobacteria</taxon>
        <taxon>Enterobacterales</taxon>
        <taxon>Enterobacteriaceae</taxon>
        <taxon>Escherichia</taxon>
    </lineage>
</organism>
<evidence type="ECO:0000250" key="1"/>
<evidence type="ECO:0000255" key="2"/>
<evidence type="ECO:0000305" key="3"/>
<accession>P0AFE1</accession>
<accession>P33605</accession>
<accession>P78236</accession>